<name>YHIT_HELPJ</name>
<organism>
    <name type="scientific">Helicobacter pylori (strain J99 / ATCC 700824)</name>
    <name type="common">Campylobacter pylori J99</name>
    <dbReference type="NCBI Taxonomy" id="85963"/>
    <lineage>
        <taxon>Bacteria</taxon>
        <taxon>Pseudomonadati</taxon>
        <taxon>Campylobacterota</taxon>
        <taxon>Epsilonproteobacteria</taxon>
        <taxon>Campylobacterales</taxon>
        <taxon>Helicobacteraceae</taxon>
        <taxon>Helicobacter</taxon>
    </lineage>
</organism>
<accession>P64383</accession>
<accession>P56147</accession>
<proteinExistence type="predicted"/>
<sequence length="104" mass="11855">MNVFEKIIQGEIPCSKILENERFLSFYDINPKAKVHALVIPKQSIQDFNGITPELMAQMTSFIFEVVEKLGIKEKGYKLLTNVGKNAGQEVMHLHFHILSGDKH</sequence>
<dbReference type="EMBL" id="AE001439">
    <property type="protein sequence ID" value="AAD06560.1"/>
    <property type="molecule type" value="Genomic_DNA"/>
</dbReference>
<dbReference type="RefSeq" id="WP_001100349.1">
    <property type="nucleotide sequence ID" value="NZ_CP011330.1"/>
</dbReference>
<dbReference type="SMR" id="P64383"/>
<dbReference type="KEGG" id="hpj:jhp_0977"/>
<dbReference type="PATRIC" id="fig|85963.30.peg.1614"/>
<dbReference type="eggNOG" id="COG0537">
    <property type="taxonomic scope" value="Bacteria"/>
</dbReference>
<dbReference type="Proteomes" id="UP000000804">
    <property type="component" value="Chromosome"/>
</dbReference>
<dbReference type="GO" id="GO:0003824">
    <property type="term" value="F:catalytic activity"/>
    <property type="evidence" value="ECO:0007669"/>
    <property type="project" value="InterPro"/>
</dbReference>
<dbReference type="CDD" id="cd01276">
    <property type="entry name" value="PKCI_related"/>
    <property type="match status" value="1"/>
</dbReference>
<dbReference type="Gene3D" id="3.30.428.10">
    <property type="entry name" value="HIT-like"/>
    <property type="match status" value="1"/>
</dbReference>
<dbReference type="InterPro" id="IPR019808">
    <property type="entry name" value="Histidine_triad_CS"/>
</dbReference>
<dbReference type="InterPro" id="IPR001310">
    <property type="entry name" value="Histidine_triad_HIT"/>
</dbReference>
<dbReference type="InterPro" id="IPR011146">
    <property type="entry name" value="HIT-like"/>
</dbReference>
<dbReference type="InterPro" id="IPR036265">
    <property type="entry name" value="HIT-like_sf"/>
</dbReference>
<dbReference type="PANTHER" id="PTHR23089">
    <property type="entry name" value="HISTIDINE TRIAD HIT PROTEIN"/>
    <property type="match status" value="1"/>
</dbReference>
<dbReference type="Pfam" id="PF01230">
    <property type="entry name" value="HIT"/>
    <property type="match status" value="1"/>
</dbReference>
<dbReference type="PRINTS" id="PR00332">
    <property type="entry name" value="HISTRIAD"/>
</dbReference>
<dbReference type="SUPFAM" id="SSF54197">
    <property type="entry name" value="HIT-like"/>
    <property type="match status" value="1"/>
</dbReference>
<dbReference type="PROSITE" id="PS00892">
    <property type="entry name" value="HIT_1"/>
    <property type="match status" value="1"/>
</dbReference>
<dbReference type="PROSITE" id="PS51084">
    <property type="entry name" value="HIT_2"/>
    <property type="match status" value="1"/>
</dbReference>
<evidence type="ECO:0000255" key="1">
    <source>
        <dbReference type="PROSITE-ProRule" id="PRU00464"/>
    </source>
</evidence>
<protein>
    <recommendedName>
        <fullName>Uncharacterized HIT-like protein jhp_0977</fullName>
    </recommendedName>
</protein>
<gene>
    <name type="ordered locus">jhp_0977</name>
</gene>
<feature type="chain" id="PRO_0000109819" description="Uncharacterized HIT-like protein jhp_0977">
    <location>
        <begin position="1"/>
        <end position="104"/>
    </location>
</feature>
<feature type="domain" description="HIT" evidence="1">
    <location>
        <begin position="3"/>
        <end position="104"/>
    </location>
</feature>
<feature type="short sequence motif" description="Histidine triad motif">
    <location>
        <begin position="93"/>
        <end position="97"/>
    </location>
</feature>
<reference key="1">
    <citation type="journal article" date="1999" name="Nature">
        <title>Genomic sequence comparison of two unrelated isolates of the human gastric pathogen Helicobacter pylori.</title>
        <authorList>
            <person name="Alm R.A."/>
            <person name="Ling L.-S.L."/>
            <person name="Moir D.T."/>
            <person name="King B.L."/>
            <person name="Brown E.D."/>
            <person name="Doig P.C."/>
            <person name="Smith D.R."/>
            <person name="Noonan B."/>
            <person name="Guild B.C."/>
            <person name="deJonge B.L."/>
            <person name="Carmel G."/>
            <person name="Tummino P.J."/>
            <person name="Caruso A."/>
            <person name="Uria-Nickelsen M."/>
            <person name="Mills D.M."/>
            <person name="Ives C."/>
            <person name="Gibson R."/>
            <person name="Merberg D."/>
            <person name="Mills S.D."/>
            <person name="Jiang Q."/>
            <person name="Taylor D.E."/>
            <person name="Vovis G.F."/>
            <person name="Trust T.J."/>
        </authorList>
    </citation>
    <scope>NUCLEOTIDE SEQUENCE [LARGE SCALE GENOMIC DNA]</scope>
    <source>
        <strain>J99 / ATCC 700824</strain>
    </source>
</reference>